<organism>
    <name type="scientific">Mycobacterium sp. (strain MCS)</name>
    <dbReference type="NCBI Taxonomy" id="164756"/>
    <lineage>
        <taxon>Bacteria</taxon>
        <taxon>Bacillati</taxon>
        <taxon>Actinomycetota</taxon>
        <taxon>Actinomycetes</taxon>
        <taxon>Mycobacteriales</taxon>
        <taxon>Mycobacteriaceae</taxon>
        <taxon>Mycobacterium</taxon>
    </lineage>
</organism>
<dbReference type="EC" id="3.6.5.3" evidence="2"/>
<dbReference type="EMBL" id="CP000384">
    <property type="protein sequence ID" value="ABG07101.1"/>
    <property type="molecule type" value="Genomic_DNA"/>
</dbReference>
<dbReference type="SMR" id="Q1BDD3"/>
<dbReference type="KEGG" id="mmc:Mmcs_0987"/>
<dbReference type="HOGENOM" id="CLU_007265_0_1_11"/>
<dbReference type="BioCyc" id="MSP164756:G1G6O-1011-MONOMER"/>
<dbReference type="GO" id="GO:0005829">
    <property type="term" value="C:cytosol"/>
    <property type="evidence" value="ECO:0007669"/>
    <property type="project" value="TreeGrafter"/>
</dbReference>
<dbReference type="GO" id="GO:0005525">
    <property type="term" value="F:GTP binding"/>
    <property type="evidence" value="ECO:0007669"/>
    <property type="project" value="UniProtKB-UniRule"/>
</dbReference>
<dbReference type="GO" id="GO:0003924">
    <property type="term" value="F:GTPase activity"/>
    <property type="evidence" value="ECO:0007669"/>
    <property type="project" value="InterPro"/>
</dbReference>
<dbReference type="GO" id="GO:0003746">
    <property type="term" value="F:translation elongation factor activity"/>
    <property type="evidence" value="ECO:0007669"/>
    <property type="project" value="UniProtKB-UniRule"/>
</dbReference>
<dbReference type="CDD" id="cd01884">
    <property type="entry name" value="EF_Tu"/>
    <property type="match status" value="1"/>
</dbReference>
<dbReference type="CDD" id="cd03697">
    <property type="entry name" value="EFTU_II"/>
    <property type="match status" value="1"/>
</dbReference>
<dbReference type="CDD" id="cd03707">
    <property type="entry name" value="EFTU_III"/>
    <property type="match status" value="1"/>
</dbReference>
<dbReference type="FunFam" id="2.40.30.10:FF:000001">
    <property type="entry name" value="Elongation factor Tu"/>
    <property type="match status" value="1"/>
</dbReference>
<dbReference type="FunFam" id="3.40.50.300:FF:000003">
    <property type="entry name" value="Elongation factor Tu"/>
    <property type="match status" value="1"/>
</dbReference>
<dbReference type="Gene3D" id="3.40.50.300">
    <property type="entry name" value="P-loop containing nucleotide triphosphate hydrolases"/>
    <property type="match status" value="1"/>
</dbReference>
<dbReference type="Gene3D" id="2.40.30.10">
    <property type="entry name" value="Translation factors"/>
    <property type="match status" value="2"/>
</dbReference>
<dbReference type="HAMAP" id="MF_00118_B">
    <property type="entry name" value="EF_Tu_B"/>
    <property type="match status" value="1"/>
</dbReference>
<dbReference type="InterPro" id="IPR041709">
    <property type="entry name" value="EF-Tu_GTP-bd"/>
</dbReference>
<dbReference type="InterPro" id="IPR050055">
    <property type="entry name" value="EF-Tu_GTPase"/>
</dbReference>
<dbReference type="InterPro" id="IPR004161">
    <property type="entry name" value="EFTu-like_2"/>
</dbReference>
<dbReference type="InterPro" id="IPR033720">
    <property type="entry name" value="EFTU_2"/>
</dbReference>
<dbReference type="InterPro" id="IPR031157">
    <property type="entry name" value="G_TR_CS"/>
</dbReference>
<dbReference type="InterPro" id="IPR027417">
    <property type="entry name" value="P-loop_NTPase"/>
</dbReference>
<dbReference type="InterPro" id="IPR005225">
    <property type="entry name" value="Small_GTP-bd"/>
</dbReference>
<dbReference type="InterPro" id="IPR000795">
    <property type="entry name" value="T_Tr_GTP-bd_dom"/>
</dbReference>
<dbReference type="InterPro" id="IPR009000">
    <property type="entry name" value="Transl_B-barrel_sf"/>
</dbReference>
<dbReference type="InterPro" id="IPR009001">
    <property type="entry name" value="Transl_elong_EF1A/Init_IF2_C"/>
</dbReference>
<dbReference type="InterPro" id="IPR004541">
    <property type="entry name" value="Transl_elong_EFTu/EF1A_bac/org"/>
</dbReference>
<dbReference type="InterPro" id="IPR004160">
    <property type="entry name" value="Transl_elong_EFTu/EF1A_C"/>
</dbReference>
<dbReference type="NCBIfam" id="TIGR00485">
    <property type="entry name" value="EF-Tu"/>
    <property type="match status" value="1"/>
</dbReference>
<dbReference type="NCBIfam" id="NF000766">
    <property type="entry name" value="PRK00049.1"/>
    <property type="match status" value="1"/>
</dbReference>
<dbReference type="NCBIfam" id="NF009372">
    <property type="entry name" value="PRK12735.1"/>
    <property type="match status" value="1"/>
</dbReference>
<dbReference type="NCBIfam" id="NF009373">
    <property type="entry name" value="PRK12736.1"/>
    <property type="match status" value="1"/>
</dbReference>
<dbReference type="NCBIfam" id="TIGR00231">
    <property type="entry name" value="small_GTP"/>
    <property type="match status" value="1"/>
</dbReference>
<dbReference type="PANTHER" id="PTHR43721:SF22">
    <property type="entry name" value="ELONGATION FACTOR TU, MITOCHONDRIAL"/>
    <property type="match status" value="1"/>
</dbReference>
<dbReference type="PANTHER" id="PTHR43721">
    <property type="entry name" value="ELONGATION FACTOR TU-RELATED"/>
    <property type="match status" value="1"/>
</dbReference>
<dbReference type="Pfam" id="PF00009">
    <property type="entry name" value="GTP_EFTU"/>
    <property type="match status" value="1"/>
</dbReference>
<dbReference type="Pfam" id="PF03144">
    <property type="entry name" value="GTP_EFTU_D2"/>
    <property type="match status" value="1"/>
</dbReference>
<dbReference type="Pfam" id="PF03143">
    <property type="entry name" value="GTP_EFTU_D3"/>
    <property type="match status" value="1"/>
</dbReference>
<dbReference type="PRINTS" id="PR00315">
    <property type="entry name" value="ELONGATNFCT"/>
</dbReference>
<dbReference type="SUPFAM" id="SSF50465">
    <property type="entry name" value="EF-Tu/eEF-1alpha/eIF2-gamma C-terminal domain"/>
    <property type="match status" value="1"/>
</dbReference>
<dbReference type="SUPFAM" id="SSF52540">
    <property type="entry name" value="P-loop containing nucleoside triphosphate hydrolases"/>
    <property type="match status" value="1"/>
</dbReference>
<dbReference type="SUPFAM" id="SSF50447">
    <property type="entry name" value="Translation proteins"/>
    <property type="match status" value="1"/>
</dbReference>
<dbReference type="PROSITE" id="PS00301">
    <property type="entry name" value="G_TR_1"/>
    <property type="match status" value="1"/>
</dbReference>
<dbReference type="PROSITE" id="PS51722">
    <property type="entry name" value="G_TR_2"/>
    <property type="match status" value="1"/>
</dbReference>
<accession>Q1BDD3</accession>
<name>EFTU_MYCSS</name>
<reference key="1">
    <citation type="submission" date="2006-06" db="EMBL/GenBank/DDBJ databases">
        <title>Complete sequence of chromosome of Mycobacterium sp. MCS.</title>
        <authorList>
            <consortium name="US DOE Joint Genome Institute"/>
            <person name="Copeland A."/>
            <person name="Lucas S."/>
            <person name="Lapidus A."/>
            <person name="Barry K."/>
            <person name="Detter J.C."/>
            <person name="Glavina del Rio T."/>
            <person name="Hammon N."/>
            <person name="Israni S."/>
            <person name="Dalin E."/>
            <person name="Tice H."/>
            <person name="Pitluck S."/>
            <person name="Martinez M."/>
            <person name="Schmutz J."/>
            <person name="Larimer F."/>
            <person name="Land M."/>
            <person name="Hauser L."/>
            <person name="Kyrpides N."/>
            <person name="Kim E."/>
            <person name="Miller C.D."/>
            <person name="Hughes J.E."/>
            <person name="Anderson A.J."/>
            <person name="Sims R.C."/>
            <person name="Richardson P."/>
        </authorList>
    </citation>
    <scope>NUCLEOTIDE SEQUENCE [LARGE SCALE GENOMIC DNA]</scope>
    <source>
        <strain>MCS</strain>
    </source>
</reference>
<feature type="chain" id="PRO_1000015706" description="Elongation factor Tu">
    <location>
        <begin position="1"/>
        <end position="396"/>
    </location>
</feature>
<feature type="domain" description="tr-type G">
    <location>
        <begin position="10"/>
        <end position="205"/>
    </location>
</feature>
<feature type="region of interest" description="G1" evidence="1">
    <location>
        <begin position="19"/>
        <end position="26"/>
    </location>
</feature>
<feature type="region of interest" description="G2" evidence="1">
    <location>
        <begin position="62"/>
        <end position="66"/>
    </location>
</feature>
<feature type="region of interest" description="G3" evidence="1">
    <location>
        <begin position="83"/>
        <end position="86"/>
    </location>
</feature>
<feature type="region of interest" description="G4" evidence="1">
    <location>
        <begin position="138"/>
        <end position="141"/>
    </location>
</feature>
<feature type="region of interest" description="G5" evidence="1">
    <location>
        <begin position="175"/>
        <end position="177"/>
    </location>
</feature>
<feature type="binding site" evidence="2">
    <location>
        <begin position="19"/>
        <end position="26"/>
    </location>
    <ligand>
        <name>GTP</name>
        <dbReference type="ChEBI" id="CHEBI:37565"/>
    </ligand>
</feature>
<feature type="binding site" evidence="2">
    <location>
        <position position="26"/>
    </location>
    <ligand>
        <name>Mg(2+)</name>
        <dbReference type="ChEBI" id="CHEBI:18420"/>
    </ligand>
</feature>
<feature type="binding site" evidence="2">
    <location>
        <begin position="83"/>
        <end position="87"/>
    </location>
    <ligand>
        <name>GTP</name>
        <dbReference type="ChEBI" id="CHEBI:37565"/>
    </ligand>
</feature>
<feature type="binding site" evidence="2">
    <location>
        <begin position="138"/>
        <end position="141"/>
    </location>
    <ligand>
        <name>GTP</name>
        <dbReference type="ChEBI" id="CHEBI:37565"/>
    </ligand>
</feature>
<protein>
    <recommendedName>
        <fullName evidence="2">Elongation factor Tu</fullName>
        <shortName evidence="2">EF-Tu</shortName>
        <ecNumber evidence="2">3.6.5.3</ecNumber>
    </recommendedName>
</protein>
<evidence type="ECO:0000250" key="1"/>
<evidence type="ECO:0000255" key="2">
    <source>
        <dbReference type="HAMAP-Rule" id="MF_00118"/>
    </source>
</evidence>
<comment type="function">
    <text evidence="2">GTP hydrolase that promotes the GTP-dependent binding of aminoacyl-tRNA to the A-site of ribosomes during protein biosynthesis.</text>
</comment>
<comment type="catalytic activity">
    <reaction evidence="2">
        <text>GTP + H2O = GDP + phosphate + H(+)</text>
        <dbReference type="Rhea" id="RHEA:19669"/>
        <dbReference type="ChEBI" id="CHEBI:15377"/>
        <dbReference type="ChEBI" id="CHEBI:15378"/>
        <dbReference type="ChEBI" id="CHEBI:37565"/>
        <dbReference type="ChEBI" id="CHEBI:43474"/>
        <dbReference type="ChEBI" id="CHEBI:58189"/>
        <dbReference type="EC" id="3.6.5.3"/>
    </reaction>
    <physiologicalReaction direction="left-to-right" evidence="2">
        <dbReference type="Rhea" id="RHEA:19670"/>
    </physiologicalReaction>
</comment>
<comment type="subunit">
    <text evidence="2">Monomer.</text>
</comment>
<comment type="subcellular location">
    <subcellularLocation>
        <location evidence="2">Cytoplasm</location>
    </subcellularLocation>
</comment>
<comment type="similarity">
    <text evidence="2">Belongs to the TRAFAC class translation factor GTPase superfamily. Classic translation factor GTPase family. EF-Tu/EF-1A subfamily.</text>
</comment>
<gene>
    <name evidence="2" type="primary">tuf</name>
    <name type="ordered locus">Mmcs_0987</name>
</gene>
<sequence>MAKAKFERTKPHVNIGTIGHVDHGKTTLTAAITKVLHDKYPELNESRAFDQIDNAPEERQRGITINISHVEYQTEKRHYAHVDAPGHADYIKNMITGAAQMDGAILVVAATDGPMPQTREHVLLARQVGVPYILVALNKADAVDDEELIELVEMEVRELLAAQDFDEDAPVVRVSALKALEGDEKWVKSVEELMDAVDESIPDPVRDTDRPFLMPVEDVFTITGRGTVVTGRVERGVVNVNEEVEIVGIRPGTTKTTVTGVEMFRKLLDQGQAGDNVGLLLRGIKREDVERGQVVVKPGTTTPHTEFDGQVYILSKDEGGRHTPFFNNYRPQFYFRTTDVTGVVTLPEGTEMVMPGDNTDISVKLIQPVAMDEGLRFAIREGGRTVGAGRVTKIHK</sequence>
<keyword id="KW-0963">Cytoplasm</keyword>
<keyword id="KW-0251">Elongation factor</keyword>
<keyword id="KW-0342">GTP-binding</keyword>
<keyword id="KW-0378">Hydrolase</keyword>
<keyword id="KW-0460">Magnesium</keyword>
<keyword id="KW-0479">Metal-binding</keyword>
<keyword id="KW-0547">Nucleotide-binding</keyword>
<keyword id="KW-0648">Protein biosynthesis</keyword>
<proteinExistence type="inferred from homology"/>